<feature type="initiator methionine" description="Removed">
    <location>
        <position position="1"/>
    </location>
</feature>
<feature type="chain" id="PRO_0000065004" description="Protein bassoon">
    <location>
        <begin position="2"/>
        <end position="3938"/>
    </location>
</feature>
<feature type="repeat" description="1">
    <location>
        <begin position="568"/>
        <end position="574"/>
    </location>
</feature>
<feature type="repeat" description="2">
    <location>
        <begin position="575"/>
        <end position="581"/>
    </location>
</feature>
<feature type="repeat" description="3">
    <location>
        <begin position="582"/>
        <end position="588"/>
    </location>
</feature>
<feature type="zinc finger region" description="C4-type" evidence="4">
    <location>
        <begin position="167"/>
        <end position="190"/>
    </location>
</feature>
<feature type="zinc finger region" description="C4-type" evidence="4">
    <location>
        <begin position="195"/>
        <end position="217"/>
    </location>
</feature>
<feature type="zinc finger region" description="C4-type" evidence="4">
    <location>
        <begin position="462"/>
        <end position="485"/>
    </location>
</feature>
<feature type="zinc finger region" description="C4-type" evidence="4">
    <location>
        <begin position="490"/>
        <end position="512"/>
    </location>
</feature>
<feature type="region of interest" description="Disordered" evidence="5">
    <location>
        <begin position="1"/>
        <end position="158"/>
    </location>
</feature>
<feature type="region of interest" description="4 X 2 AA tandem repeats of P-G">
    <location>
        <begin position="62"/>
        <end position="70"/>
    </location>
</feature>
<feature type="region of interest" description="Disordered" evidence="5">
    <location>
        <begin position="228"/>
        <end position="346"/>
    </location>
</feature>
<feature type="region of interest" description="Disordered" evidence="5">
    <location>
        <begin position="361"/>
        <end position="456"/>
    </location>
</feature>
<feature type="region of interest" description="Disordered" evidence="5">
    <location>
        <begin position="523"/>
        <end position="921"/>
    </location>
</feature>
<feature type="region of interest" description="3 X 7 AA tandem repeats of K-A-S-P-Q-A-[AK]">
    <location>
        <begin position="568"/>
        <end position="588"/>
    </location>
</feature>
<feature type="region of interest" description="Disordered" evidence="5">
    <location>
        <begin position="934"/>
        <end position="1247"/>
    </location>
</feature>
<feature type="region of interest" description="Disordered" evidence="5">
    <location>
        <begin position="1294"/>
        <end position="1541"/>
    </location>
</feature>
<feature type="region of interest" description="Disordered" evidence="5">
    <location>
        <begin position="1561"/>
        <end position="1611"/>
    </location>
</feature>
<feature type="region of interest" description="Disordered" evidence="5">
    <location>
        <begin position="1914"/>
        <end position="1964"/>
    </location>
</feature>
<feature type="region of interest" description="Disordered" evidence="5">
    <location>
        <begin position="2280"/>
        <end position="2305"/>
    </location>
</feature>
<feature type="region of interest" description="Disordered" evidence="5">
    <location>
        <begin position="2318"/>
        <end position="2343"/>
    </location>
</feature>
<feature type="region of interest" description="Disordered" evidence="5">
    <location>
        <begin position="2461"/>
        <end position="2486"/>
    </location>
</feature>
<feature type="region of interest" description="Disordered" evidence="5">
    <location>
        <begin position="2513"/>
        <end position="2648"/>
    </location>
</feature>
<feature type="region of interest" description="Interaction with DAO" evidence="11">
    <location>
        <begin position="2715"/>
        <end position="3263"/>
    </location>
</feature>
<feature type="region of interest" description="Disordered" evidence="5">
    <location>
        <begin position="2839"/>
        <end position="2859"/>
    </location>
</feature>
<feature type="region of interest" description="Sufficient for binding to ERC2">
    <location>
        <begin position="2934"/>
        <end position="2996"/>
    </location>
</feature>
<feature type="region of interest" description="Disordered" evidence="5">
    <location>
        <begin position="3055"/>
        <end position="3148"/>
    </location>
</feature>
<feature type="region of interest" description="Disordered" evidence="5">
    <location>
        <begin position="3162"/>
        <end position="3399"/>
    </location>
</feature>
<feature type="region of interest" description="Disordered" evidence="5">
    <location>
        <begin position="3414"/>
        <end position="3546"/>
    </location>
</feature>
<feature type="region of interest" description="Disordered" evidence="5">
    <location>
        <begin position="3569"/>
        <end position="3910"/>
    </location>
</feature>
<feature type="coiled-coil region" evidence="4">
    <location>
        <begin position="1032"/>
        <end position="1087"/>
    </location>
</feature>
<feature type="coiled-coil region" evidence="4">
    <location>
        <begin position="1176"/>
        <end position="1203"/>
    </location>
</feature>
<feature type="coiled-coil region" evidence="4">
    <location>
        <begin position="2345"/>
        <end position="2470"/>
    </location>
</feature>
<feature type="coiled-coil region" evidence="4">
    <location>
        <begin position="2933"/>
        <end position="2975"/>
    </location>
</feature>
<feature type="coiled-coil region" evidence="4">
    <location>
        <begin position="3772"/>
        <end position="3803"/>
    </location>
</feature>
<feature type="compositionally biased region" description="Gly residues" evidence="5">
    <location>
        <begin position="9"/>
        <end position="29"/>
    </location>
</feature>
<feature type="compositionally biased region" description="Low complexity" evidence="5">
    <location>
        <begin position="31"/>
        <end position="61"/>
    </location>
</feature>
<feature type="compositionally biased region" description="Polar residues" evidence="5">
    <location>
        <begin position="86"/>
        <end position="98"/>
    </location>
</feature>
<feature type="compositionally biased region" description="Polar residues" evidence="5">
    <location>
        <begin position="127"/>
        <end position="154"/>
    </location>
</feature>
<feature type="compositionally biased region" description="Polar residues" evidence="5">
    <location>
        <begin position="230"/>
        <end position="240"/>
    </location>
</feature>
<feature type="compositionally biased region" description="Polar residues" evidence="5">
    <location>
        <begin position="361"/>
        <end position="376"/>
    </location>
</feature>
<feature type="compositionally biased region" description="Pro residues" evidence="5">
    <location>
        <begin position="394"/>
        <end position="406"/>
    </location>
</feature>
<feature type="compositionally biased region" description="Pro residues" evidence="5">
    <location>
        <begin position="526"/>
        <end position="539"/>
    </location>
</feature>
<feature type="compositionally biased region" description="Low complexity" evidence="5">
    <location>
        <begin position="548"/>
        <end position="589"/>
    </location>
</feature>
<feature type="compositionally biased region" description="Pro residues" evidence="5">
    <location>
        <begin position="616"/>
        <end position="629"/>
    </location>
</feature>
<feature type="compositionally biased region" description="Polar residues" evidence="5">
    <location>
        <begin position="668"/>
        <end position="677"/>
    </location>
</feature>
<feature type="compositionally biased region" description="Low complexity" evidence="5">
    <location>
        <begin position="678"/>
        <end position="692"/>
    </location>
</feature>
<feature type="compositionally biased region" description="Polar residues" evidence="5">
    <location>
        <begin position="693"/>
        <end position="702"/>
    </location>
</feature>
<feature type="compositionally biased region" description="Acidic residues" evidence="5">
    <location>
        <begin position="769"/>
        <end position="784"/>
    </location>
</feature>
<feature type="compositionally biased region" description="Acidic residues" evidence="5">
    <location>
        <begin position="847"/>
        <end position="858"/>
    </location>
</feature>
<feature type="compositionally biased region" description="Low complexity" evidence="5">
    <location>
        <begin position="979"/>
        <end position="996"/>
    </location>
</feature>
<feature type="compositionally biased region" description="Acidic residues" evidence="5">
    <location>
        <begin position="1034"/>
        <end position="1047"/>
    </location>
</feature>
<feature type="compositionally biased region" description="Basic and acidic residues" evidence="5">
    <location>
        <begin position="1048"/>
        <end position="1061"/>
    </location>
</feature>
<feature type="compositionally biased region" description="Basic and acidic residues" evidence="5">
    <location>
        <begin position="1102"/>
        <end position="1117"/>
    </location>
</feature>
<feature type="compositionally biased region" description="Low complexity" evidence="5">
    <location>
        <begin position="1118"/>
        <end position="1128"/>
    </location>
</feature>
<feature type="compositionally biased region" description="Low complexity" evidence="5">
    <location>
        <begin position="1158"/>
        <end position="1175"/>
    </location>
</feature>
<feature type="compositionally biased region" description="Basic and acidic residues" evidence="5">
    <location>
        <begin position="1177"/>
        <end position="1192"/>
    </location>
</feature>
<feature type="compositionally biased region" description="Low complexity" evidence="5">
    <location>
        <begin position="1194"/>
        <end position="1204"/>
    </location>
</feature>
<feature type="compositionally biased region" description="Polar residues" evidence="5">
    <location>
        <begin position="1211"/>
        <end position="1224"/>
    </location>
</feature>
<feature type="compositionally biased region" description="Low complexity" evidence="5">
    <location>
        <begin position="1318"/>
        <end position="1328"/>
    </location>
</feature>
<feature type="compositionally biased region" description="Basic and acidic residues" evidence="5">
    <location>
        <begin position="1342"/>
        <end position="1351"/>
    </location>
</feature>
<feature type="compositionally biased region" description="Low complexity" evidence="5">
    <location>
        <begin position="1352"/>
        <end position="1364"/>
    </location>
</feature>
<feature type="compositionally biased region" description="Low complexity" evidence="5">
    <location>
        <begin position="1374"/>
        <end position="1386"/>
    </location>
</feature>
<feature type="compositionally biased region" description="Polar residues" evidence="5">
    <location>
        <begin position="1402"/>
        <end position="1426"/>
    </location>
</feature>
<feature type="compositionally biased region" description="Low complexity" evidence="5">
    <location>
        <begin position="1476"/>
        <end position="1487"/>
    </location>
</feature>
<feature type="compositionally biased region" description="Polar residues" evidence="5">
    <location>
        <begin position="1496"/>
        <end position="1510"/>
    </location>
</feature>
<feature type="compositionally biased region" description="Polar residues" evidence="5">
    <location>
        <begin position="1561"/>
        <end position="1597"/>
    </location>
</feature>
<feature type="compositionally biased region" description="Polar residues" evidence="5">
    <location>
        <begin position="2527"/>
        <end position="2537"/>
    </location>
</feature>
<feature type="compositionally biased region" description="Basic and acidic residues" evidence="5">
    <location>
        <begin position="2629"/>
        <end position="2641"/>
    </location>
</feature>
<feature type="compositionally biased region" description="Polar residues" evidence="5">
    <location>
        <begin position="3055"/>
        <end position="3068"/>
    </location>
</feature>
<feature type="compositionally biased region" description="Basic and acidic residues" evidence="5">
    <location>
        <begin position="3184"/>
        <end position="3196"/>
    </location>
</feature>
<feature type="compositionally biased region" description="Polar residues" evidence="5">
    <location>
        <begin position="3198"/>
        <end position="3222"/>
    </location>
</feature>
<feature type="compositionally biased region" description="Polar residues" evidence="5">
    <location>
        <begin position="3304"/>
        <end position="3315"/>
    </location>
</feature>
<feature type="compositionally biased region" description="Basic and acidic residues" evidence="5">
    <location>
        <begin position="3316"/>
        <end position="3328"/>
    </location>
</feature>
<feature type="compositionally biased region" description="Basic and acidic residues" evidence="5">
    <location>
        <begin position="3358"/>
        <end position="3377"/>
    </location>
</feature>
<feature type="compositionally biased region" description="Basic and acidic residues" evidence="5">
    <location>
        <begin position="3450"/>
        <end position="3469"/>
    </location>
</feature>
<feature type="compositionally biased region" description="Low complexity" evidence="5">
    <location>
        <begin position="3506"/>
        <end position="3520"/>
    </location>
</feature>
<feature type="compositionally biased region" description="Basic and acidic residues" evidence="5">
    <location>
        <begin position="3535"/>
        <end position="3546"/>
    </location>
</feature>
<feature type="compositionally biased region" description="Basic and acidic residues" evidence="5">
    <location>
        <begin position="3578"/>
        <end position="3588"/>
    </location>
</feature>
<feature type="compositionally biased region" description="Basic residues" evidence="5">
    <location>
        <begin position="3638"/>
        <end position="3651"/>
    </location>
</feature>
<feature type="compositionally biased region" description="Basic and acidic residues" evidence="5">
    <location>
        <begin position="3652"/>
        <end position="3676"/>
    </location>
</feature>
<feature type="compositionally biased region" description="Low complexity" evidence="5">
    <location>
        <begin position="3751"/>
        <end position="3820"/>
    </location>
</feature>
<feature type="compositionally biased region" description="Pro residues" evidence="5">
    <location>
        <begin position="3834"/>
        <end position="3848"/>
    </location>
</feature>
<feature type="compositionally biased region" description="Low complexity" evidence="5">
    <location>
        <begin position="3860"/>
        <end position="3887"/>
    </location>
</feature>
<feature type="compositionally biased region" description="Low complexity" evidence="5">
    <location>
        <begin position="3894"/>
        <end position="3904"/>
    </location>
</feature>
<feature type="modified residue" description="Phosphoserine" evidence="2">
    <location>
        <position position="142"/>
    </location>
</feature>
<feature type="modified residue" description="Omega-N-methylarginine" evidence="2">
    <location>
        <position position="145"/>
    </location>
</feature>
<feature type="modified residue" description="Phosphoserine" evidence="2">
    <location>
        <position position="241"/>
    </location>
</feature>
<feature type="modified residue" description="Phosphoserine" evidence="2">
    <location>
        <position position="245"/>
    </location>
</feature>
<feature type="modified residue" description="Omega-N-methylarginine" evidence="2">
    <location>
        <position position="863"/>
    </location>
</feature>
<feature type="modified residue" description="Phosphoserine" evidence="2">
    <location>
        <position position="965"/>
    </location>
</feature>
<feature type="modified residue" description="Phosphoserine" evidence="2">
    <location>
        <position position="1035"/>
    </location>
</feature>
<feature type="modified residue" description="Phosphoserine" evidence="2">
    <location>
        <position position="1036"/>
    </location>
</feature>
<feature type="modified residue" description="Phosphoserine" evidence="2">
    <location>
        <position position="1085"/>
    </location>
</feature>
<feature type="modified residue" description="Phosphothreonine" evidence="2">
    <location>
        <position position="1087"/>
    </location>
</feature>
<feature type="modified residue" description="Phosphoserine" evidence="2">
    <location>
        <position position="1093"/>
    </location>
</feature>
<feature type="modified residue" description="Phosphoserine" evidence="2">
    <location>
        <position position="1099"/>
    </location>
</feature>
<feature type="modified residue" description="Phosphoserine" evidence="2">
    <location>
        <position position="1221"/>
    </location>
</feature>
<feature type="modified residue" description="Phosphoserine" evidence="2">
    <location>
        <position position="1470"/>
    </location>
</feature>
<feature type="modified residue" description="Phosphoserine" evidence="2">
    <location>
        <position position="1479"/>
    </location>
</feature>
<feature type="modified residue" description="Phosphoserine" evidence="2">
    <location>
        <position position="1481"/>
    </location>
</feature>
<feature type="modified residue" description="Omega-N-methylarginine" evidence="2">
    <location>
        <position position="1780"/>
    </location>
</feature>
<feature type="modified residue" description="Omega-N-methylarginine" evidence="2">
    <location>
        <position position="1784"/>
    </location>
</feature>
<feature type="modified residue" description="Asymmetric dimethylarginine; alternate" evidence="2">
    <location>
        <position position="1794"/>
    </location>
</feature>
<feature type="modified residue" description="Omega-N-methylarginine; alternate" evidence="2">
    <location>
        <position position="1794"/>
    </location>
</feature>
<feature type="modified residue" description="Omega-N-methylarginine" evidence="2">
    <location>
        <position position="1806"/>
    </location>
</feature>
<feature type="modified residue" description="Phosphoserine" evidence="2">
    <location>
        <position position="1978"/>
    </location>
</feature>
<feature type="modified residue" description="Phosphoserine" evidence="2">
    <location>
        <position position="2034"/>
    </location>
</feature>
<feature type="modified residue" description="Omega-N-methylarginine" evidence="2">
    <location>
        <position position="2039"/>
    </location>
</feature>
<feature type="modified residue" description="Omega-N-methylarginine" evidence="2">
    <location>
        <position position="2069"/>
    </location>
</feature>
<feature type="modified residue" description="Asymmetric dimethylarginine" evidence="2">
    <location>
        <position position="2243"/>
    </location>
</feature>
<feature type="modified residue" description="Asymmetric dimethylarginine" evidence="2">
    <location>
        <position position="2253"/>
    </location>
</feature>
<feature type="modified residue" description="Asymmetric dimethylarginine" evidence="2">
    <location>
        <position position="2259"/>
    </location>
</feature>
<feature type="modified residue" description="Phosphoserine" evidence="2">
    <location>
        <position position="2564"/>
    </location>
</feature>
<feature type="modified residue" description="Phosphothreonine" evidence="2">
    <location>
        <position position="2581"/>
    </location>
</feature>
<feature type="modified residue" description="Phosphothreonine" evidence="2">
    <location>
        <position position="2608"/>
    </location>
</feature>
<feature type="modified residue" description="Phosphoserine" evidence="2">
    <location>
        <position position="2796"/>
    </location>
</feature>
<feature type="modified residue" description="Phosphoserine" evidence="2">
    <location>
        <position position="2845"/>
    </location>
</feature>
<feature type="modified residue" description="Phosphoserine" evidence="2">
    <location>
        <position position="2851"/>
    </location>
</feature>
<feature type="modified residue" description="Phosphoserine" evidence="2">
    <location>
        <position position="3007"/>
    </location>
</feature>
<feature type="modified residue" description="Phosphoserine" evidence="2">
    <location>
        <position position="3286"/>
    </location>
</feature>
<feature type="modified residue" description="Phosphoserine" evidence="2">
    <location>
        <position position="3368"/>
    </location>
</feature>
<feature type="modified residue" description="Omega-N-methylarginine" evidence="2">
    <location>
        <position position="3488"/>
    </location>
</feature>
<feature type="modified residue" description="Omega-N-methylarginine" evidence="2">
    <location>
        <position position="3822"/>
    </location>
</feature>
<feature type="lipid moiety-binding region" description="N-myristoyl glycine" evidence="8">
    <location>
        <position position="2"/>
    </location>
</feature>
<feature type="glycosylation site" description="O-linked (GlcNAc) threonine" evidence="10">
    <location>
        <position position="1339"/>
    </location>
</feature>
<feature type="glycosylation site" description="O-linked (GlcNAc) threonine" evidence="1">
    <location>
        <position position="1380"/>
    </location>
</feature>
<feature type="glycosylation site" description="O-linked (GlcNAc) threonine" evidence="1">
    <location>
        <position position="1922"/>
    </location>
</feature>
<feature type="glycosylation site" description="O-linked (GlcNAc) threonine" evidence="1">
    <location>
        <position position="2307"/>
    </location>
</feature>
<feature type="glycosylation site" description="O-linked (GlcNAc) threonine" evidence="1">
    <location>
        <position position="2510"/>
    </location>
</feature>
<feature type="glycosylation site" description="O-linked (GlcNAc) threonine" evidence="1">
    <location>
        <position position="2685"/>
    </location>
</feature>
<feature type="glycosylation site" description="O-linked (GlcNAc) threonine" evidence="1">
    <location>
        <position position="2930"/>
    </location>
</feature>
<feature type="mutagenesis site" description="Loss of myristoylation." evidence="8">
    <original>G</original>
    <variation>A</variation>
    <location>
        <position position="2"/>
    </location>
</feature>
<reference key="1">
    <citation type="journal article" date="1998" name="J. Cell Biol.">
        <title>Bassoon, a novel zinc-finger CAG/Glutamine-repeat protein selectively localized at the active zone of presynaptic nerve terminals.</title>
        <authorList>
            <person name="tom Dieck S."/>
            <person name="Sanmarti-Vila L."/>
            <person name="Langnaese K."/>
            <person name="Richter K."/>
            <person name="Kindler S."/>
            <person name="Soyke A."/>
            <person name="Wex H."/>
            <person name="Smalla K.-H."/>
            <person name="Kaempf U."/>
            <person name="Fraenzer J.-T."/>
            <person name="Stumm M."/>
            <person name="Garner C.C."/>
            <person name="Gundelfinger E.D."/>
        </authorList>
    </citation>
    <scope>NUCLEOTIDE SEQUENCE [MRNA]</scope>
    <scope>SUBCELLULAR LOCATION</scope>
    <source>
        <strain>Sprague-Dawley</strain>
        <tissue>Brain</tissue>
    </source>
</reference>
<reference key="2">
    <citation type="journal article" date="1999" name="Eur. J. Neurosci.">
        <title>Differential expression of the presynaptic cytomatrix protein bassoon among ribbon synapses in the mammalian retina.</title>
        <authorList>
            <person name="Brandstatter J.H."/>
            <person name="Fletcher E.L."/>
            <person name="Garner C.C."/>
            <person name="Gundelfinger E.D."/>
            <person name="Wassle H."/>
        </authorList>
    </citation>
    <scope>SUBCELLULAR LOCATION</scope>
</reference>
<reference key="3">
    <citation type="journal article" date="2003" name="Mol. Cell. Neurosci.">
        <title>Functional regions of the presynaptic cytomatrix protein bassoon: significance for synaptic targeting and cytomatrix anchoring.</title>
        <authorList>
            <person name="Dresbach T."/>
            <person name="Hempelmann A."/>
            <person name="Spilker C."/>
            <person name="tom Dieck S."/>
            <person name="Altrock W.D."/>
            <person name="Zuschratter W."/>
            <person name="Garner C.C."/>
            <person name="Gundelfinger E.D."/>
        </authorList>
    </citation>
    <scope>SUBCELLULAR LOCATION</scope>
    <scope>MYRISTOYLATION AT GLY-2</scope>
    <scope>MUTAGENESIS OF GLY-2</scope>
</reference>
<reference key="4">
    <citation type="journal article" date="2002" name="J. Cell Biol.">
        <title>Cast: a novel protein of the cytomatrix at the active zone of synapses that forms a ternary complex with RIM1 and Munc13-1.</title>
        <authorList>
            <person name="Ohtsuka T."/>
            <person name="Takao-Rikitsu E."/>
            <person name="Inoue E."/>
            <person name="Inoue M."/>
            <person name="Takeuchi M."/>
            <person name="Matsubara K."/>
            <person name="Deguchi-Tawarada M."/>
            <person name="Satoh K."/>
            <person name="Morimoto K."/>
            <person name="Nakanishi H."/>
            <person name="Takai Y."/>
        </authorList>
    </citation>
    <scope>INTERACTION WITH ERC2; RIMS1 AND UNC13A</scope>
    <scope>DEVELOPMENTAL STAGE</scope>
    <scope>FUNCTION</scope>
</reference>
<reference key="5">
    <citation type="journal article" date="2004" name="J. Cell Biol.">
        <title>Physical and functional interaction of the active zone proteins, CAST, RIM1, and Bassoon, in neurotransmitter release.</title>
        <authorList>
            <person name="Takao-Rikitsu E."/>
            <person name="Mochida S."/>
            <person name="Inoue E."/>
            <person name="Deguchi-Tawarada M."/>
            <person name="Inoue M."/>
            <person name="Ohtsuka T."/>
            <person name="Takai Y."/>
        </authorList>
    </citation>
    <scope>FUNCTION</scope>
    <scope>INTERACTION WITH ERC2; RIMS1 AND UNC13A</scope>
    <scope>IDENTIFICATION IN A COMPLEX WITH RIMS1 AND ERC2</scope>
</reference>
<reference key="6">
    <citation type="journal article" date="2004" name="Proc. Natl. Acad. Sci. U.S.A.">
        <title>Exploring the O-GlcNAc proteome: direct identification of O-GlcNAc-modified proteins from the brain.</title>
        <authorList>
            <person name="Khidekel N."/>
            <person name="Ficarro S.B."/>
            <person name="Peters E.C."/>
            <person name="Hsieh-Wilson L.C."/>
        </authorList>
    </citation>
    <scope>GLYCOSYLATION AT THR-1339</scope>
    <source>
        <tissue>Brain</tissue>
    </source>
</reference>
<reference key="7">
    <citation type="journal article" date="2011" name="J. Biol. Chem.">
        <title>D-amino acid oxidase activity is inhibited by an interaction with bassoon protein at the presynaptic active zone.</title>
        <authorList>
            <person name="Popiolek M."/>
            <person name="Ross J.F."/>
            <person name="Charych E."/>
            <person name="Chanda P."/>
            <person name="Gundelfinger E.D."/>
            <person name="Moss S.J."/>
            <person name="Brandon N.J."/>
            <person name="Pausch M.H."/>
        </authorList>
    </citation>
    <scope>FUNCTION</scope>
    <scope>INTERACTION WITH DAO</scope>
    <scope>IDENTIFICATION BY MASS SPECTROMETRY</scope>
</reference>
<reference key="8">
    <citation type="journal article" date="2012" name="J. Neurosci.">
        <title>Formation of Golgi-derived active zone precursor vesicles.</title>
        <authorList>
            <person name="Maas C."/>
            <person name="Torres V.I."/>
            <person name="Altrock W.D."/>
            <person name="Leal-Ortiz S."/>
            <person name="Wagh D."/>
            <person name="Terry-Lorenzo R.T."/>
            <person name="Fejtova A."/>
            <person name="Gundelfinger E.D."/>
            <person name="Ziv N.E."/>
            <person name="Garner C.C."/>
        </authorList>
    </citation>
    <scope>FUNCTION</scope>
</reference>
<reference key="9">
    <citation type="journal article" date="2013" name="EMBO J.">
        <title>Bassoon and Piccolo maintain synapse integrity by regulating protein ubiquitination and degradation.</title>
        <authorList>
            <person name="Waites C.L."/>
            <person name="Leal-Ortiz S.A."/>
            <person name="Okerlund N."/>
            <person name="Dalke H."/>
            <person name="Fejtova A."/>
            <person name="Altrock W.D."/>
            <person name="Gundelfinger E.D."/>
            <person name="Garner C.C."/>
        </authorList>
    </citation>
    <scope>FUNCTION</scope>
    <scope>INTERACTION WITH SIAH1</scope>
    <scope>DISRUPTION PHENOTYPE</scope>
</reference>
<reference key="10">
    <citation type="journal article" date="2015" name="Neuron">
        <title>Modulation of Presynaptic Release Probability by the Vertebrate-Specific Protein Mover.</title>
        <authorList>
            <person name="Koerber C."/>
            <person name="Horstmann H."/>
            <person name="Venkataramani V."/>
            <person name="Herrmannsdoerfer F."/>
            <person name="Kremer T."/>
            <person name="Kaiser M."/>
            <person name="Schwenger D.B."/>
            <person name="Ahmed S."/>
            <person name="Dean C."/>
            <person name="Dresbach T."/>
            <person name="Kuner T."/>
        </authorList>
    </citation>
    <scope>SUBCELLULAR LOCATION</scope>
</reference>
<reference key="11">
    <citation type="journal article" date="2015" name="EMBO J.">
        <title>Synaptic activity controls localization and function of CtBP1 via binding to Bassoon and Piccolo.</title>
        <authorList>
            <person name="Ivanova D."/>
            <person name="Dirks A."/>
            <person name="Montenegro-Venegas C."/>
            <person name="Schoene C."/>
            <person name="Altrock W.D."/>
            <person name="Marini C."/>
            <person name="Frischknecht R."/>
            <person name="Schanze D."/>
            <person name="Zenker M."/>
            <person name="Gundelfinger E.D."/>
            <person name="Fejtova A."/>
        </authorList>
    </citation>
    <scope>FUNCTION</scope>
    <scope>INTERACTION WITH CTBP1</scope>
</reference>
<reference key="12">
    <citation type="journal article" date="2016" name="PLoS ONE">
        <title>Trio, a Rho Family GEF, Interacts with the Presynaptic Active Zone Proteins Piccolo and Bassoon.</title>
        <authorList>
            <person name="Terry-Lorenzo R.T."/>
            <person name="Torres V.I."/>
            <person name="Wagh D."/>
            <person name="Galaz J."/>
            <person name="Swanson S.K."/>
            <person name="Florens L."/>
            <person name="Washburn M.P."/>
            <person name="Waites C.L."/>
            <person name="Gundelfinger E.D."/>
            <person name="Reimer R.J."/>
            <person name="Garner C.C."/>
        </authorList>
    </citation>
    <scope>FUNCTION</scope>
    <scope>INTERACTION WITH TRIO</scope>
</reference>
<reference key="13">
    <citation type="journal article" date="2017" name="Sci. Rep.">
        <title>The Kohlschuetter-Toenz syndrome associated gene Rogdi encodes a novel presynaptic protein.</title>
        <authorList>
            <person name="Riemann D."/>
            <person name="Wallrafen R."/>
            <person name="Dresbach T."/>
        </authorList>
    </citation>
    <scope>SUBCELLULAR LOCATION</scope>
    <scope>TISSUE SPECIFICITY</scope>
</reference>
<sequence>MGNEASLEGGAGEGPLPPGGSGLGPGPGAGKPPSALAGGGQLPVAGAARAAGPPTPGLGLVPGPGPGPGPGSVSRRLDPKEPLGSQRATSPTPKQASATAPGRESPRETRAQGLSGQEAEGPRRTLQVDSRTQRSGRSPSVSPDRGSTPTSPYSVPQIAPLPSSTLCPICKTSDLTSTSSQPNFNTCTQCHNKVCNQCGFNPNPHLTQVKEWLCLNCQMQRALGMDMTTAPRSKSQQQLHSPALSPAHSPAKQPLGKPEQERSRSPGATQSGPRQAEAARATSVPGPTQATAPPEVGRVSPQPPLSTKPSTAEPRPPAGEAQGKSATTVPSGLGAAEQTQGGLTGKLFGLGASLLTQASTLMSVQPEADTQGQPSPSKGPPKIVFSDASKEAGPRPPGSGPGPGPTPGAKTEPGPRTGPGSGPGALAKTGGTPSPKHGRADHQAASKAAAKPKTMPKERAACPLCQAELNVGSRGPANYNTCTACKLRVCTLCGFNPTPHLVEKTEWLCLNCQTKRLLEGSLGEPAPLPLPTPQEPPAGVPQRAAGASPLKQKGPQGPGQPSGSLPPKASPQAAKASPQAAKASPQAKPLRASEPSKTSSSAPEKKTGIPVKAEPVPKPPPETAVPPGTPKAKSGVKRTDPATPVVKPVPEAPKSGEAEEPVPKPYSQDLSRSPQSLSDTGYSSDGVSSSQSEITGVVQQEVEQLDSAGVTGPRPPSPSELHKVGSSMRPSLEAQAVAPSGEWSKPPSGSAVEDQKRRPHSLSIMPEAFDSDEELGDILEEDDSLAMGRQREQQDTAESSDDFGSQLRHDYVEDSSEGGLSPLPPQPPARADMTDEEFMRRQILEMSAEEDNLEEDDTAVSGRGLAKHGAQKASARPRPESSQESVALPKRRLPHNATTGYEELLSEEGPAEPTDGALQGGLRRFKTIGLNSTGRLWSTSLDLGQGSDPNLDREPELEMESLTGSPEDRSRGEHSSTLPASTPSYTSGTSPTSLSSLEEDSDSSPSRRQRLEEAKQQRKARHRSHGPLLPTIEDSSEEEELREEEELLREQEKMREVEQQRIRSTARKTRRDKEELRAQRRRERSKTPPSNLSPIEDASPTEELRQAAEMEELHRSSCSEYSPSPSLDSEAETLDGGPTRLYKSGSEYNLPAFMSLCSPTETPSGSSTTPSSGRPLKSAEEAYEDMMRKAELLQRQQGQAAGARGPHGGPSQPTGPRSQGSFEYQDTLDHDYGGRASQPAADGTPAGLGATVYEEILQTSQSIARMRQASSRDLAFTEDKKKEKQFLNAESAYMDPMKQNGGPLTPGTSPTQLAAPVSFPTSTSSDSSGGRVIPDVRVTQHFAKEPQEPLKLHSSPASPSLASKEVGMTFSQGPGTPATTAMAPCPASLPRGYMTPAGPERSPSTSSTIHSYGQPPTTANYGSQTEELPHAPSGPAGSGRASREKPLSGGDGEVGPPQPSRGYSYFTGSSPPLSPSTPSESPTFSPSKLGPRATAEFSTQTPSLTPSSDIPRSVGTPSPMVAQGTQTPHRPSTPRLVWQQSSQEAPVMVITLASDASSQTRMVHASASTSPLCSPTDSQPASHSYSQTTPPSASQMPSEPAGPPGFPRAPSAGVDGPLALYGWGALPAENISLCRISSVPGTSRVEPGPRPPGTAVVDLRTAVKPTPIILTDQGMDLTSLAVEARKYGLALDPVPGRQSTAVQPLVINLNAQEQTHTFLATATTVSITMASSVLMAQQKQPVVYGDPFQSRLDFGQGSGSPVCLAQVKQVEQAVQTAPYRGGPRGRPREAKFARYNLPNQVTPLARRDILITQMGTAQSVSLKPGPVPEPGAEPHRATPAELRAHALPGTRKPHTVVVQMGEGAAGTVTTLLPEEPAGALDLTGMRPESRLACCDMAYKFPFGSSCTGTFHPAPSAPDKSVTDAALPGQSSGPFYSPRDPEPPEPLTFRAQGVVGPGPHEEQRPYPQGLPGRLYSSMSDTNLAEAGLNYHAQRIGQLFQGPGRDSAVDLSSLKHSYSLGFADGRYLGQGLQYGSFTDLRHPTDLLSHPLPMRPYSSVSNIYSDHRYGPRGDAVGFQEASLAQYSATTAREISRMCAALNSMDQYGGRHGGGSGGPDLVPYQPQHGPGLNAPQGLASLRSGLLGNPTYPEGQPSPGNLAQYGPAASQGTAVRQLLPSTATVRAADGMIYSTINTPIAATLPITTQPASVLRPMVRGGMYRPYGSGGVTAVPLTSLTRVPMIAPRVPLGPAGLYRYPAPSRFPIASTIPPAEGPVYLGKPAAAKASGAGGPPRPELPAGGAREEPLSTTAPPAVIKEAPVAQAPAPPPGQKPAGDAAAGSGSGVLGRPVMEKEEASQEDRQRKQQEQLLQLERERVELEKLRQLRLQEELERERVELQRHREEEQLLVQRELQELQTIKHHVLQQQQEERQAQFALQREQLAQQRLQLEQIQQLQQQLQQQLEEQKQRQKAPFPATCEAPSRGPPPAATELAQNGQYWPPLTHTAFIAVAGTEGPGQAREPVLHRGLPSSASDMSLQTEEQWEAGRSGIKKRHSMPRLRDACEPESGPDPSTVRRIADSSVQTDDEEGEGRYLLTRRRRTRRSADCSVQTDDEDNAEWEQPVRRRRSRLSRHSDSGSDSKHEASASSSAAAAAARAMSSVGIQTISDCSVQTEPEQLPRVSPAIHITAATDPKVEIVRYISAPEKTGRGESLACQTEPDGQAQGVAGPQLIGPTAISPYLPGIQIVTPGALGRFEKKKPDPLEIGYQAHLPPESLSQLVSRQPPKSPQVLYSPVSPLSPHRLLDTSFASSERLNKAHVSPQKQFIADSTLRQQTLPRPMKTLQRSLSDPKPLSPTAEESAKERFSLYQHQGGLGSQVSALPPNGLVRKVKRTLPSPPPEEAHLPLAGQVPSQLYAASLLQRGLAGPTTVPATKASLLRELDRDLRLVEHESTKLRKKQAELDEEEKEIDAKLKYLELGITQRKESLAKDRVGRDYPPLRGLGEHRDYLSDSELNQLRLQGCTTPAGQYVDYPASAAVPATPSGPTAFQQPRFPPAATQYTAGSSGPTQNGFLAHQAPTYTGPSTYPAPTYPPGTSYPAEPGLPSQPAFHPTGHYAAPTPMPTTQSAPFPVQADSHAAHQKPRQTSLADLEQKVPTNYEVISSPAVTVSSTPSETGYSGPAVSSSYEHGKAPEHPRGGDRSSVSQSPAPTYPSDSHYTSLEQNVPRNYVMIDDISELTKDSTPTASDSQRPEPLGPGGVSGRPGKDPGEPAVLEGPTLPCCYGRGEEESEEDSYDPRGKSGHHRSMESNGRPASTHYYSDSDYRHGARADKYGPGPMGPKHPSKNLAPAAISSKRSKHRKQGMEQKISKFSPIEEAKDVESDLASYPPPTVSSSLTSRSRKFQDEITYGLKKNVYEQQRYYGVSSRDTAEEDDRMYGGSSRSRVASAYSGEKLSSHDFSSRSKGYERERETAQRLQKAGPKPSSLSMAHGRARPPMRSQASEEESPVSPLGRPRPAGGALPPGDTCPQFCSSHSMPDVQEHVKDGPRAHAYKREEGYILDDSHCVVSDSEAYHLGQEETDWFDKPRDARSDRFRHHGGHTVSSSQKRGPARHSYHDYDEPPEEGLWPHDEGGPGRHTSAKEHRHHGDHGRHSGRHAGEEPGRRAARPHARDMGRHETRPHPQASPAPAMQKKGQPGYPSSADYSQPSRAPSAYHHASDSKKGSRQAHSGPTVLQPKPEAQAQPQMQGRQAVPGPQQSQPPSSRQTPSGTASRQPQTQQQQQQQQQQQQQQQQQQQQQQQQGLGQQAPQQAPSQARLQQQSQPTTRSTAPAASHPAGKPQPGPTTAPGPQPAGLPRAEQAGSSKPAAKAPQQGRAPQAQSAPGPAGAKTGARPGGTPGAPAGQPAAEGESVFSKILPGGAAEQAGKLTEAVSAFGKKFSSFW</sequence>
<comment type="function">
    <text evidence="11 12 13 14 16">Scaffold protein of the presynaptic cytomatrix at the active zone (CAZ) which is the place in the synapse where neurotransmitter is released (PubMed:22875941). After synthesis, participates in the formation of Golgi-derived membranous organelles termed Piccolo-Bassoon transport vesicles (PTVs) that are transported along axons to sites of nascent synaptic contacts (PubMed:22875941). At the presynaptic active zone, regulates the spatial organization of synaptic vesicle cluster, the protein complexes that execute membrane fusion and compensatory endocytosis (PubMed:27907191). Also functions in processes other than assembly such as the regulation of specific presynaptic protein ubiquitination by interacting with SIAH1 or the regulation of presynaptic autophagy by associating with ATG5 (PubMed:23403927, PubMed:27907191). Also mediates synapse to nucleus communication leading to reconfiguration of gene expression by associating with the transcriptional corepressor CTBP1 and by subsequently reducing the size of its pool available for nuclear import (PubMed:25652077). Inhibits the activity of the proportion of DAO enzyme that localizes to the presynaptic active zone, which may modulate synaptic transmission (PubMed:21700703).</text>
</comment>
<comment type="subunit">
    <text evidence="2 3 7 9 11 13 14 16">Interacts with PCLO, ERC2/CAST1, RIMS1 and UNC13A (PubMed:12163476, PubMed:14734538). Interacts with TPRG1L (By similarity). Interacts with DYNLL1 and DYNLL2; these interactions potentially link PTVs to dynein and myosin V motor complexes (By similarity). Interacts with ATG5; this interaction is important for the regulation of presynaptic autophagy (By similarity). Interacts (via C-terminus) with TRIO (via N-terminus) (PubMed:27907191). Interacts with CTBP1 (PubMed:25652077). Interacts with SIAH1; this interaction negatively regulates SIAH1 E3 ligase activity (PubMed:23403927). Interacts (via coiled region) with DAO; the interaction is direct (PubMed:21700703).</text>
</comment>
<comment type="interaction">
    <interactant intactId="EBI-2271660">
        <id>O88778</id>
    </interactant>
    <interactant intactId="EBI-957514">
        <id>Q920M9</id>
        <label>Siah1</label>
    </interactant>
    <organismsDiffer>false</organismsDiffer>
    <experiments>3</experiments>
</comment>
<comment type="subcellular location">
    <subcellularLocation>
        <location evidence="6">Cytoplasm</location>
    </subcellularLocation>
    <subcellularLocation>
        <location evidence="6 8 15">Presynaptic active zone</location>
    </subcellularLocation>
    <subcellularLocation>
        <location evidence="6">Cytoplasm</location>
        <location evidence="6">Cytoskeleton</location>
    </subcellularLocation>
    <subcellularLocation>
        <location evidence="15 17">Cytoplasmic vesicle</location>
        <location evidence="15 17">Secretory vesicle</location>
        <location evidence="15 17">Synaptic vesicle membrane</location>
        <topology evidence="15 17">Peripheral membrane protein</topology>
    </subcellularLocation>
    <text evidence="6 8 15">In retina, is localized in the outer plexiform layer at ribbon synapses formed by rods and cones but was absent from basal synaptic contacts formed by cones. In the retinal inner plexiform layer localized to conventional inhibitory GABAergic synapses, made by amacrine cells, but absent from the bipolar cell ribbon synapses (PubMed:10564375).</text>
</comment>
<comment type="tissue specificity">
    <text evidence="17">Detected at synapses in the stratum lucidum in the hippocampus CA3 region (at protein level).</text>
</comment>
<comment type="developmental stage">
    <text evidence="7">Detected at embryonic day 18 dpc and at later stages. The expression does not significantly change during the developmental stages tested.</text>
</comment>
<comment type="PTM">
    <text evidence="8">Myristoylated. The N-terminal myristoylation is not sufficient for presynaptic localization.</text>
</comment>
<comment type="disruption phenotype">
    <text evidence="13">Loss of both Bassoon/BSN and Piccolo/PCLO leads to the aberrant degradation of multiple presynaptic proteins, culminating in synapse degeneration.</text>
</comment>
<organism>
    <name type="scientific">Rattus norvegicus</name>
    <name type="common">Rat</name>
    <dbReference type="NCBI Taxonomy" id="10116"/>
    <lineage>
        <taxon>Eukaryota</taxon>
        <taxon>Metazoa</taxon>
        <taxon>Chordata</taxon>
        <taxon>Craniata</taxon>
        <taxon>Vertebrata</taxon>
        <taxon>Euteleostomi</taxon>
        <taxon>Mammalia</taxon>
        <taxon>Eutheria</taxon>
        <taxon>Euarchontoglires</taxon>
        <taxon>Glires</taxon>
        <taxon>Rodentia</taxon>
        <taxon>Myomorpha</taxon>
        <taxon>Muroidea</taxon>
        <taxon>Muridae</taxon>
        <taxon>Murinae</taxon>
        <taxon>Rattus</taxon>
    </lineage>
</organism>
<dbReference type="EMBL" id="Y16563">
    <property type="protein sequence ID" value="CAA76287.1"/>
    <property type="molecule type" value="mRNA"/>
</dbReference>
<dbReference type="PIR" id="T42761">
    <property type="entry name" value="T42761"/>
</dbReference>
<dbReference type="SMR" id="O88778"/>
<dbReference type="FunCoup" id="O88778">
    <property type="interactions" value="1488"/>
</dbReference>
<dbReference type="IntAct" id="O88778">
    <property type="interactions" value="8"/>
</dbReference>
<dbReference type="MINT" id="O88778"/>
<dbReference type="STRING" id="10116.ENSRNOP00000039162"/>
<dbReference type="GlyCosmos" id="O88778">
    <property type="glycosylation" value="7 sites, No reported glycans"/>
</dbReference>
<dbReference type="GlyGen" id="O88778">
    <property type="glycosylation" value="23 sites, 1 O-linked glycan (2 sites)"/>
</dbReference>
<dbReference type="iPTMnet" id="O88778"/>
<dbReference type="PhosphoSitePlus" id="O88778"/>
<dbReference type="PaxDb" id="10116-ENSRNOP00000039162"/>
<dbReference type="ABCD" id="O88778">
    <property type="antibodies" value="1 sequenced antibody"/>
</dbReference>
<dbReference type="UCSC" id="RGD:2223">
    <property type="organism name" value="rat"/>
</dbReference>
<dbReference type="AGR" id="RGD:2223"/>
<dbReference type="RGD" id="2223">
    <property type="gene designation" value="Bsn"/>
</dbReference>
<dbReference type="eggNOG" id="ENOG502QSYS">
    <property type="taxonomic scope" value="Eukaryota"/>
</dbReference>
<dbReference type="InParanoid" id="O88778"/>
<dbReference type="PhylomeDB" id="O88778"/>
<dbReference type="PRO" id="PR:O88778"/>
<dbReference type="Proteomes" id="UP000002494">
    <property type="component" value="Unplaced"/>
</dbReference>
<dbReference type="GO" id="GO:0030424">
    <property type="term" value="C:axon"/>
    <property type="evidence" value="ECO:0000266"/>
    <property type="project" value="RGD"/>
</dbReference>
<dbReference type="GO" id="GO:1904115">
    <property type="term" value="C:axon cytoplasm"/>
    <property type="evidence" value="ECO:0000314"/>
    <property type="project" value="SynGO-UCL"/>
</dbReference>
<dbReference type="GO" id="GO:0005938">
    <property type="term" value="C:cell cortex"/>
    <property type="evidence" value="ECO:0000314"/>
    <property type="project" value="SynGO-UCL"/>
</dbReference>
<dbReference type="GO" id="GO:0009986">
    <property type="term" value="C:cell surface"/>
    <property type="evidence" value="ECO:0000266"/>
    <property type="project" value="RGD"/>
</dbReference>
<dbReference type="GO" id="GO:0098683">
    <property type="term" value="C:cochlear hair cell ribbon synapse"/>
    <property type="evidence" value="ECO:0000266"/>
    <property type="project" value="RGD"/>
</dbReference>
<dbReference type="GO" id="GO:0048788">
    <property type="term" value="C:cytoskeleton of presynaptic active zone"/>
    <property type="evidence" value="ECO:0000314"/>
    <property type="project" value="SynGO-UCL"/>
</dbReference>
<dbReference type="GO" id="GO:0030425">
    <property type="term" value="C:dendrite"/>
    <property type="evidence" value="ECO:0000266"/>
    <property type="project" value="RGD"/>
</dbReference>
<dbReference type="GO" id="GO:0060076">
    <property type="term" value="C:excitatory synapse"/>
    <property type="evidence" value="ECO:0000314"/>
    <property type="project" value="BHF-UCL"/>
</dbReference>
<dbReference type="GO" id="GO:0098982">
    <property type="term" value="C:GABA-ergic synapse"/>
    <property type="evidence" value="ECO:0000314"/>
    <property type="project" value="SynGO"/>
</dbReference>
<dbReference type="GO" id="GO:0098978">
    <property type="term" value="C:glutamatergic synapse"/>
    <property type="evidence" value="ECO:0000314"/>
    <property type="project" value="SynGO"/>
</dbReference>
<dbReference type="GO" id="GO:0005798">
    <property type="term" value="C:Golgi-associated vesicle"/>
    <property type="evidence" value="ECO:0000314"/>
    <property type="project" value="UniProtKB"/>
</dbReference>
<dbReference type="GO" id="GO:0098686">
    <property type="term" value="C:hippocampal mossy fiber to CA3 synapse"/>
    <property type="evidence" value="ECO:0000314"/>
    <property type="project" value="SynGO"/>
</dbReference>
<dbReference type="GO" id="GO:0060077">
    <property type="term" value="C:inhibitory synapse"/>
    <property type="evidence" value="ECO:0000314"/>
    <property type="project" value="RGD"/>
</dbReference>
<dbReference type="GO" id="GO:0044306">
    <property type="term" value="C:neuron projection terminus"/>
    <property type="evidence" value="ECO:0000266"/>
    <property type="project" value="RGD"/>
</dbReference>
<dbReference type="GO" id="GO:0043025">
    <property type="term" value="C:neuronal cell body"/>
    <property type="evidence" value="ECO:0000314"/>
    <property type="project" value="RGD"/>
</dbReference>
<dbReference type="GO" id="GO:1990257">
    <property type="term" value="C:piccolo-bassoon transport vesicle"/>
    <property type="evidence" value="ECO:0000314"/>
    <property type="project" value="SynGO-UCL"/>
</dbReference>
<dbReference type="GO" id="GO:0014069">
    <property type="term" value="C:postsynaptic density"/>
    <property type="evidence" value="ECO:0000266"/>
    <property type="project" value="RGD"/>
</dbReference>
<dbReference type="GO" id="GO:0098793">
    <property type="term" value="C:presynapse"/>
    <property type="evidence" value="ECO:0000266"/>
    <property type="project" value="RGD"/>
</dbReference>
<dbReference type="GO" id="GO:0048786">
    <property type="term" value="C:presynaptic active zone"/>
    <property type="evidence" value="ECO:0000314"/>
    <property type="project" value="UniProtKB"/>
</dbReference>
<dbReference type="GO" id="GO:0098831">
    <property type="term" value="C:presynaptic active zone cytoplasmic component"/>
    <property type="evidence" value="ECO:0000314"/>
    <property type="project" value="SynGO"/>
</dbReference>
<dbReference type="GO" id="GO:0097470">
    <property type="term" value="C:ribbon synapse"/>
    <property type="evidence" value="ECO:0000314"/>
    <property type="project" value="RGD"/>
</dbReference>
<dbReference type="GO" id="GO:0098685">
    <property type="term" value="C:Schaffer collateral - CA1 synapse"/>
    <property type="evidence" value="ECO:0000266"/>
    <property type="project" value="RGD"/>
</dbReference>
<dbReference type="GO" id="GO:0045202">
    <property type="term" value="C:synapse"/>
    <property type="evidence" value="ECO:0000266"/>
    <property type="project" value="RGD"/>
</dbReference>
<dbReference type="GO" id="GO:0008021">
    <property type="term" value="C:synaptic vesicle"/>
    <property type="evidence" value="ECO:0000314"/>
    <property type="project" value="UniProtKB"/>
</dbReference>
<dbReference type="GO" id="GO:0030672">
    <property type="term" value="C:synaptic vesicle membrane"/>
    <property type="evidence" value="ECO:0007669"/>
    <property type="project" value="UniProtKB-SubCell"/>
</dbReference>
<dbReference type="GO" id="GO:0005802">
    <property type="term" value="C:trans-Golgi network"/>
    <property type="evidence" value="ECO:0000314"/>
    <property type="project" value="RGD"/>
</dbReference>
<dbReference type="GO" id="GO:0045503">
    <property type="term" value="F:dynein light chain binding"/>
    <property type="evidence" value="ECO:0000353"/>
    <property type="project" value="SynGO-UCL"/>
</dbReference>
<dbReference type="GO" id="GO:0004857">
    <property type="term" value="F:enzyme inhibitor activity"/>
    <property type="evidence" value="ECO:0000314"/>
    <property type="project" value="UniProtKB"/>
</dbReference>
<dbReference type="GO" id="GO:0098882">
    <property type="term" value="F:structural constituent of presynaptic active zone"/>
    <property type="evidence" value="ECO:0000266"/>
    <property type="project" value="RGD"/>
</dbReference>
<dbReference type="GO" id="GO:0001222">
    <property type="term" value="F:transcription corepressor binding"/>
    <property type="evidence" value="ECO:0000353"/>
    <property type="project" value="ParkinsonsUK-UCL"/>
</dbReference>
<dbReference type="GO" id="GO:0008270">
    <property type="term" value="F:zinc ion binding"/>
    <property type="evidence" value="ECO:0007669"/>
    <property type="project" value="UniProtKB-KW"/>
</dbReference>
<dbReference type="GO" id="GO:0008088">
    <property type="term" value="P:axo-dendritic transport"/>
    <property type="evidence" value="ECO:0000314"/>
    <property type="project" value="SynGO-UCL"/>
</dbReference>
<dbReference type="GO" id="GO:0007010">
    <property type="term" value="P:cytoskeleton organization"/>
    <property type="evidence" value="ECO:0000303"/>
    <property type="project" value="RGD"/>
</dbReference>
<dbReference type="GO" id="GO:0050804">
    <property type="term" value="P:modulation of chemical synaptic transmission"/>
    <property type="evidence" value="ECO:0000314"/>
    <property type="project" value="UniProtKB"/>
</dbReference>
<dbReference type="GO" id="GO:1904071">
    <property type="term" value="P:presynaptic active zone assembly"/>
    <property type="evidence" value="ECO:0000314"/>
    <property type="project" value="UniProtKB"/>
</dbReference>
<dbReference type="GO" id="GO:0035418">
    <property type="term" value="P:protein localization to synapse"/>
    <property type="evidence" value="ECO:0000266"/>
    <property type="project" value="RGD"/>
</dbReference>
<dbReference type="GO" id="GO:0098693">
    <property type="term" value="P:regulation of synaptic vesicle cycle"/>
    <property type="evidence" value="ECO:0000266"/>
    <property type="project" value="RGD"/>
</dbReference>
<dbReference type="GO" id="GO:1904666">
    <property type="term" value="P:regulation of ubiquitin protein ligase activity"/>
    <property type="evidence" value="ECO:0000314"/>
    <property type="project" value="UniProtKB"/>
</dbReference>
<dbReference type="GO" id="GO:0008090">
    <property type="term" value="P:retrograde axonal transport"/>
    <property type="evidence" value="ECO:0000314"/>
    <property type="project" value="SynGO-UCL"/>
</dbReference>
<dbReference type="GO" id="GO:0050808">
    <property type="term" value="P:synapse organization"/>
    <property type="evidence" value="ECO:0000314"/>
    <property type="project" value="UniProtKB"/>
</dbReference>
<dbReference type="GO" id="GO:0097091">
    <property type="term" value="P:synaptic vesicle clustering"/>
    <property type="evidence" value="ECO:0000266"/>
    <property type="project" value="RGD"/>
</dbReference>
<dbReference type="CDD" id="cd15773">
    <property type="entry name" value="FYVE1_BSN"/>
    <property type="match status" value="1"/>
</dbReference>
<dbReference type="FunFam" id="3.30.40.10:FF:000326">
    <property type="entry name" value="Bassoon presynaptic cytomatrix protein"/>
    <property type="match status" value="1"/>
</dbReference>
<dbReference type="Gene3D" id="3.30.40.10">
    <property type="entry name" value="Zinc/RING finger domain, C3HC4 (zinc finger)"/>
    <property type="match status" value="2"/>
</dbReference>
<dbReference type="InterPro" id="IPR030627">
    <property type="entry name" value="Bsn_FYVE_dom"/>
</dbReference>
<dbReference type="InterPro" id="IPR052098">
    <property type="entry name" value="Presynaptic_Scaffold_Bsn/Pclo"/>
</dbReference>
<dbReference type="InterPro" id="IPR011011">
    <property type="entry name" value="Znf_FYVE_PHD"/>
</dbReference>
<dbReference type="InterPro" id="IPR008899">
    <property type="entry name" value="Znf_piccolo"/>
</dbReference>
<dbReference type="InterPro" id="IPR013083">
    <property type="entry name" value="Znf_RING/FYVE/PHD"/>
</dbReference>
<dbReference type="PANTHER" id="PTHR14113">
    <property type="entry name" value="PICCOLO/BASSOON"/>
    <property type="match status" value="1"/>
</dbReference>
<dbReference type="PANTHER" id="PTHR14113:SF1">
    <property type="entry name" value="PROTEIN BASSOON"/>
    <property type="match status" value="1"/>
</dbReference>
<dbReference type="Pfam" id="PF05715">
    <property type="entry name" value="zf-piccolo"/>
    <property type="match status" value="2"/>
</dbReference>
<dbReference type="SUPFAM" id="SSF57903">
    <property type="entry name" value="FYVE/PHD zinc finger"/>
    <property type="match status" value="2"/>
</dbReference>
<evidence type="ECO:0000250" key="1"/>
<evidence type="ECO:0000250" key="2">
    <source>
        <dbReference type="UniProtKB" id="O88737"/>
    </source>
</evidence>
<evidence type="ECO:0000250" key="3">
    <source>
        <dbReference type="UniProtKB" id="Q9UPA5"/>
    </source>
</evidence>
<evidence type="ECO:0000255" key="4"/>
<evidence type="ECO:0000256" key="5">
    <source>
        <dbReference type="SAM" id="MobiDB-lite"/>
    </source>
</evidence>
<evidence type="ECO:0000269" key="6">
    <source>
    </source>
</evidence>
<evidence type="ECO:0000269" key="7">
    <source>
    </source>
</evidence>
<evidence type="ECO:0000269" key="8">
    <source>
    </source>
</evidence>
<evidence type="ECO:0000269" key="9">
    <source>
    </source>
</evidence>
<evidence type="ECO:0000269" key="10">
    <source>
    </source>
</evidence>
<evidence type="ECO:0000269" key="11">
    <source>
    </source>
</evidence>
<evidence type="ECO:0000269" key="12">
    <source>
    </source>
</evidence>
<evidence type="ECO:0000269" key="13">
    <source>
    </source>
</evidence>
<evidence type="ECO:0000269" key="14">
    <source>
    </source>
</evidence>
<evidence type="ECO:0000269" key="15">
    <source>
    </source>
</evidence>
<evidence type="ECO:0000269" key="16">
    <source>
    </source>
</evidence>
<evidence type="ECO:0000269" key="17">
    <source>
    </source>
</evidence>
<evidence type="ECO:0000303" key="18">
    <source>
    </source>
</evidence>
<evidence type="ECO:0000305" key="19"/>
<evidence type="ECO:0000312" key="20">
    <source>
        <dbReference type="RGD" id="2223"/>
    </source>
</evidence>
<accession>O88778</accession>
<proteinExistence type="evidence at protein level"/>
<gene>
    <name evidence="20" type="primary">Bsn</name>
</gene>
<protein>
    <recommendedName>
        <fullName evidence="18 19">Protein bassoon</fullName>
    </recommendedName>
</protein>
<keyword id="KW-0966">Cell projection</keyword>
<keyword id="KW-0175">Coiled coil</keyword>
<keyword id="KW-0963">Cytoplasm</keyword>
<keyword id="KW-0968">Cytoplasmic vesicle</keyword>
<keyword id="KW-0206">Cytoskeleton</keyword>
<keyword id="KW-0325">Glycoprotein</keyword>
<keyword id="KW-0449">Lipoprotein</keyword>
<keyword id="KW-0472">Membrane</keyword>
<keyword id="KW-0479">Metal-binding</keyword>
<keyword id="KW-0488">Methylation</keyword>
<keyword id="KW-0519">Myristate</keyword>
<keyword id="KW-0597">Phosphoprotein</keyword>
<keyword id="KW-1185">Reference proteome</keyword>
<keyword id="KW-0677">Repeat</keyword>
<keyword id="KW-0770">Synapse</keyword>
<keyword id="KW-0862">Zinc</keyword>
<keyword id="KW-0863">Zinc-finger</keyword>
<name>BSN_RAT</name>